<gene>
    <name evidence="1" type="primary">atpG</name>
    <name type="ordered locus">CBO0155</name>
    <name type="ordered locus">CLC_0203</name>
</gene>
<protein>
    <recommendedName>
        <fullName evidence="1">ATP synthase gamma chain</fullName>
    </recommendedName>
    <alternativeName>
        <fullName evidence="1">ATP synthase F1 sector gamma subunit</fullName>
    </alternativeName>
    <alternativeName>
        <fullName evidence="1">F-ATPase gamma subunit</fullName>
    </alternativeName>
</protein>
<proteinExistence type="inferred from homology"/>
<evidence type="ECO:0000255" key="1">
    <source>
        <dbReference type="HAMAP-Rule" id="MF_00815"/>
    </source>
</evidence>
<sequence length="282" mass="31717">MAGAGLIGIRRRIKSVTNIRKITKAMGLVSTAKLRKARVNLEINKKYYNEYKIILKDIINFIEDSNIYIDGNGSHKKLYVIFTSDSGLCGSFNINIINNVINEIKEDKENSLVIVIGQKGRMYLKKLGINTLAEYIEIPDVPTTKEAGTIAKNIIKLYSSKEVGEVFLVYSEFYSPVKQQVLINKILPFTKENKSDNKYIEFNPPVTQLMDEILENYLKATILNCFSNSKASENGSRMTAMNGATDNANDLLDNLDLQFNRLRQSAITQEISEIVGGAEAQR</sequence>
<keyword id="KW-0066">ATP synthesis</keyword>
<keyword id="KW-1003">Cell membrane</keyword>
<keyword id="KW-0139">CF(1)</keyword>
<keyword id="KW-0375">Hydrogen ion transport</keyword>
<keyword id="KW-0406">Ion transport</keyword>
<keyword id="KW-0472">Membrane</keyword>
<keyword id="KW-1185">Reference proteome</keyword>
<keyword id="KW-0813">Transport</keyword>
<accession>A5HY51</accession>
<accession>A7G071</accession>
<feature type="chain" id="PRO_1000053192" description="ATP synthase gamma chain">
    <location>
        <begin position="1"/>
        <end position="282"/>
    </location>
</feature>
<comment type="function">
    <text evidence="1">Produces ATP from ADP in the presence of a proton gradient across the membrane. The gamma chain is believed to be important in regulating ATPase activity and the flow of protons through the CF(0) complex.</text>
</comment>
<comment type="subunit">
    <text evidence="1">F-type ATPases have 2 components, CF(1) - the catalytic core - and CF(0) - the membrane proton channel. CF(1) has five subunits: alpha(3), beta(3), gamma(1), delta(1), epsilon(1). CF(0) has three main subunits: a, b and c.</text>
</comment>
<comment type="subcellular location">
    <subcellularLocation>
        <location evidence="1">Cell membrane</location>
        <topology evidence="1">Peripheral membrane protein</topology>
    </subcellularLocation>
</comment>
<comment type="similarity">
    <text evidence="1">Belongs to the ATPase gamma chain family.</text>
</comment>
<name>ATPG_CLOBH</name>
<organism>
    <name type="scientific">Clostridium botulinum (strain Hall / ATCC 3502 / NCTC 13319 / Type A)</name>
    <dbReference type="NCBI Taxonomy" id="441771"/>
    <lineage>
        <taxon>Bacteria</taxon>
        <taxon>Bacillati</taxon>
        <taxon>Bacillota</taxon>
        <taxon>Clostridia</taxon>
        <taxon>Eubacteriales</taxon>
        <taxon>Clostridiaceae</taxon>
        <taxon>Clostridium</taxon>
    </lineage>
</organism>
<reference key="1">
    <citation type="journal article" date="2007" name="Genome Res.">
        <title>Genome sequence of a proteolytic (Group I) Clostridium botulinum strain Hall A and comparative analysis of the clostridial genomes.</title>
        <authorList>
            <person name="Sebaihia M."/>
            <person name="Peck M.W."/>
            <person name="Minton N.P."/>
            <person name="Thomson N.R."/>
            <person name="Holden M.T.G."/>
            <person name="Mitchell W.J."/>
            <person name="Carter A.T."/>
            <person name="Bentley S.D."/>
            <person name="Mason D.R."/>
            <person name="Crossman L."/>
            <person name="Paul C.J."/>
            <person name="Ivens A."/>
            <person name="Wells-Bennik M.H.J."/>
            <person name="Davis I.J."/>
            <person name="Cerdeno-Tarraga A.M."/>
            <person name="Churcher C."/>
            <person name="Quail M.A."/>
            <person name="Chillingworth T."/>
            <person name="Feltwell T."/>
            <person name="Fraser A."/>
            <person name="Goodhead I."/>
            <person name="Hance Z."/>
            <person name="Jagels K."/>
            <person name="Larke N."/>
            <person name="Maddison M."/>
            <person name="Moule S."/>
            <person name="Mungall K."/>
            <person name="Norbertczak H."/>
            <person name="Rabbinowitsch E."/>
            <person name="Sanders M."/>
            <person name="Simmonds M."/>
            <person name="White B."/>
            <person name="Whithead S."/>
            <person name="Parkhill J."/>
        </authorList>
    </citation>
    <scope>NUCLEOTIDE SEQUENCE [LARGE SCALE GENOMIC DNA]</scope>
    <source>
        <strain>Hall / ATCC 3502 / NCTC 13319 / Type A</strain>
    </source>
</reference>
<reference key="2">
    <citation type="journal article" date="2007" name="PLoS ONE">
        <title>Analysis of the neurotoxin complex genes in Clostridium botulinum A1-A4 and B1 strains: BoNT/A3, /Ba4 and /B1 clusters are located within plasmids.</title>
        <authorList>
            <person name="Smith T.J."/>
            <person name="Hill K.K."/>
            <person name="Foley B.T."/>
            <person name="Detter J.C."/>
            <person name="Munk A.C."/>
            <person name="Bruce D.C."/>
            <person name="Doggett N.A."/>
            <person name="Smith L.A."/>
            <person name="Marks J.D."/>
            <person name="Xie G."/>
            <person name="Brettin T.S."/>
        </authorList>
    </citation>
    <scope>NUCLEOTIDE SEQUENCE [LARGE SCALE GENOMIC DNA]</scope>
    <source>
        <strain>Hall / ATCC 3502 / NCTC 13319 / Type A</strain>
    </source>
</reference>
<dbReference type="EMBL" id="CP000727">
    <property type="protein sequence ID" value="ABS36809.1"/>
    <property type="molecule type" value="Genomic_DNA"/>
</dbReference>
<dbReference type="EMBL" id="AM412317">
    <property type="protein sequence ID" value="CAL81710.1"/>
    <property type="molecule type" value="Genomic_DNA"/>
</dbReference>
<dbReference type="RefSeq" id="WP_003387835.1">
    <property type="nucleotide sequence ID" value="NC_009698.1"/>
</dbReference>
<dbReference type="RefSeq" id="YP_001252702.1">
    <property type="nucleotide sequence ID" value="NC_009495.1"/>
</dbReference>
<dbReference type="RefSeq" id="YP_001386114.1">
    <property type="nucleotide sequence ID" value="NC_009698.1"/>
</dbReference>
<dbReference type="SMR" id="A5HY51"/>
<dbReference type="GeneID" id="5184410"/>
<dbReference type="KEGG" id="cbh:CLC_0203"/>
<dbReference type="KEGG" id="cbo:CBO0155"/>
<dbReference type="PATRIC" id="fig|413999.7.peg.154"/>
<dbReference type="HOGENOM" id="CLU_050669_0_1_9"/>
<dbReference type="PRO" id="PR:A5HY51"/>
<dbReference type="Proteomes" id="UP000001986">
    <property type="component" value="Chromosome"/>
</dbReference>
<dbReference type="GO" id="GO:0005886">
    <property type="term" value="C:plasma membrane"/>
    <property type="evidence" value="ECO:0007669"/>
    <property type="project" value="UniProtKB-SubCell"/>
</dbReference>
<dbReference type="GO" id="GO:0045259">
    <property type="term" value="C:proton-transporting ATP synthase complex"/>
    <property type="evidence" value="ECO:0007669"/>
    <property type="project" value="UniProtKB-KW"/>
</dbReference>
<dbReference type="GO" id="GO:0005524">
    <property type="term" value="F:ATP binding"/>
    <property type="evidence" value="ECO:0007669"/>
    <property type="project" value="UniProtKB-UniRule"/>
</dbReference>
<dbReference type="GO" id="GO:0046933">
    <property type="term" value="F:proton-transporting ATP synthase activity, rotational mechanism"/>
    <property type="evidence" value="ECO:0007669"/>
    <property type="project" value="UniProtKB-UniRule"/>
</dbReference>
<dbReference type="GO" id="GO:0015986">
    <property type="term" value="P:proton motive force-driven ATP synthesis"/>
    <property type="evidence" value="ECO:0000318"/>
    <property type="project" value="GO_Central"/>
</dbReference>
<dbReference type="GO" id="GO:0042777">
    <property type="term" value="P:proton motive force-driven plasma membrane ATP synthesis"/>
    <property type="evidence" value="ECO:0007669"/>
    <property type="project" value="UniProtKB-UniRule"/>
</dbReference>
<dbReference type="CDD" id="cd12151">
    <property type="entry name" value="F1-ATPase_gamma"/>
    <property type="match status" value="1"/>
</dbReference>
<dbReference type="FunFam" id="3.40.1380.10:FF:000012">
    <property type="entry name" value="ATP synthase gamma chain"/>
    <property type="match status" value="1"/>
</dbReference>
<dbReference type="Gene3D" id="3.40.1380.10">
    <property type="match status" value="1"/>
</dbReference>
<dbReference type="Gene3D" id="1.10.287.80">
    <property type="entry name" value="ATP synthase, gamma subunit, helix hairpin domain"/>
    <property type="match status" value="1"/>
</dbReference>
<dbReference type="HAMAP" id="MF_00815">
    <property type="entry name" value="ATP_synth_gamma_bact"/>
    <property type="match status" value="1"/>
</dbReference>
<dbReference type="InterPro" id="IPR035968">
    <property type="entry name" value="ATP_synth_F1_ATPase_gsu"/>
</dbReference>
<dbReference type="InterPro" id="IPR000131">
    <property type="entry name" value="ATP_synth_F1_gsu"/>
</dbReference>
<dbReference type="InterPro" id="IPR023632">
    <property type="entry name" value="ATP_synth_F1_gsu_CS"/>
</dbReference>
<dbReference type="NCBIfam" id="TIGR01146">
    <property type="entry name" value="ATPsyn_F1gamma"/>
    <property type="match status" value="1"/>
</dbReference>
<dbReference type="PANTHER" id="PTHR11693">
    <property type="entry name" value="ATP SYNTHASE GAMMA CHAIN"/>
    <property type="match status" value="1"/>
</dbReference>
<dbReference type="PANTHER" id="PTHR11693:SF22">
    <property type="entry name" value="ATP SYNTHASE SUBUNIT GAMMA, MITOCHONDRIAL"/>
    <property type="match status" value="1"/>
</dbReference>
<dbReference type="Pfam" id="PF00231">
    <property type="entry name" value="ATP-synt"/>
    <property type="match status" value="1"/>
</dbReference>
<dbReference type="PRINTS" id="PR00126">
    <property type="entry name" value="ATPASEGAMMA"/>
</dbReference>
<dbReference type="SUPFAM" id="SSF52943">
    <property type="entry name" value="ATP synthase (F1-ATPase), gamma subunit"/>
    <property type="match status" value="1"/>
</dbReference>
<dbReference type="PROSITE" id="PS00153">
    <property type="entry name" value="ATPASE_GAMMA"/>
    <property type="match status" value="1"/>
</dbReference>